<gene>
    <name evidence="1" type="primary">leuS</name>
    <name type="ordered locus">SPH_0372</name>
</gene>
<reference key="1">
    <citation type="journal article" date="2010" name="Genome Biol.">
        <title>Structure and dynamics of the pan-genome of Streptococcus pneumoniae and closely related species.</title>
        <authorList>
            <person name="Donati C."/>
            <person name="Hiller N.L."/>
            <person name="Tettelin H."/>
            <person name="Muzzi A."/>
            <person name="Croucher N.J."/>
            <person name="Angiuoli S.V."/>
            <person name="Oggioni M."/>
            <person name="Dunning Hotopp J.C."/>
            <person name="Hu F.Z."/>
            <person name="Riley D.R."/>
            <person name="Covacci A."/>
            <person name="Mitchell T.J."/>
            <person name="Bentley S.D."/>
            <person name="Kilian M."/>
            <person name="Ehrlich G.D."/>
            <person name="Rappuoli R."/>
            <person name="Moxon E.R."/>
            <person name="Masignani V."/>
        </authorList>
    </citation>
    <scope>NUCLEOTIDE SEQUENCE [LARGE SCALE GENOMIC DNA]</scope>
    <source>
        <strain>Hungary19A-6</strain>
    </source>
</reference>
<keyword id="KW-0030">Aminoacyl-tRNA synthetase</keyword>
<keyword id="KW-0067">ATP-binding</keyword>
<keyword id="KW-0963">Cytoplasm</keyword>
<keyword id="KW-0436">Ligase</keyword>
<keyword id="KW-0547">Nucleotide-binding</keyword>
<keyword id="KW-0648">Protein biosynthesis</keyword>
<accession>B1I8Y2</accession>
<dbReference type="EC" id="6.1.1.4" evidence="1"/>
<dbReference type="EMBL" id="CP000936">
    <property type="protein sequence ID" value="ACA37591.1"/>
    <property type="molecule type" value="Genomic_DNA"/>
</dbReference>
<dbReference type="RefSeq" id="WP_000011744.1">
    <property type="nucleotide sequence ID" value="NC_010380.1"/>
</dbReference>
<dbReference type="SMR" id="B1I8Y2"/>
<dbReference type="KEGG" id="spv:SPH_0372"/>
<dbReference type="HOGENOM" id="CLU_004427_0_0_9"/>
<dbReference type="Proteomes" id="UP000002163">
    <property type="component" value="Chromosome"/>
</dbReference>
<dbReference type="GO" id="GO:0005829">
    <property type="term" value="C:cytosol"/>
    <property type="evidence" value="ECO:0007669"/>
    <property type="project" value="TreeGrafter"/>
</dbReference>
<dbReference type="GO" id="GO:0002161">
    <property type="term" value="F:aminoacyl-tRNA deacylase activity"/>
    <property type="evidence" value="ECO:0007669"/>
    <property type="project" value="InterPro"/>
</dbReference>
<dbReference type="GO" id="GO:0005524">
    <property type="term" value="F:ATP binding"/>
    <property type="evidence" value="ECO:0007669"/>
    <property type="project" value="UniProtKB-UniRule"/>
</dbReference>
<dbReference type="GO" id="GO:0004823">
    <property type="term" value="F:leucine-tRNA ligase activity"/>
    <property type="evidence" value="ECO:0007669"/>
    <property type="project" value="UniProtKB-UniRule"/>
</dbReference>
<dbReference type="GO" id="GO:0006429">
    <property type="term" value="P:leucyl-tRNA aminoacylation"/>
    <property type="evidence" value="ECO:0007669"/>
    <property type="project" value="UniProtKB-UniRule"/>
</dbReference>
<dbReference type="CDD" id="cd07958">
    <property type="entry name" value="Anticodon_Ia_Leu_BEm"/>
    <property type="match status" value="1"/>
</dbReference>
<dbReference type="CDD" id="cd00812">
    <property type="entry name" value="LeuRS_core"/>
    <property type="match status" value="1"/>
</dbReference>
<dbReference type="FunFam" id="1.10.730.10:FF:000012">
    <property type="entry name" value="Leucine--tRNA ligase"/>
    <property type="match status" value="1"/>
</dbReference>
<dbReference type="FunFam" id="3.40.50.620:FF:000056">
    <property type="entry name" value="Leucine--tRNA ligase"/>
    <property type="match status" value="1"/>
</dbReference>
<dbReference type="FunFam" id="3.40.50.620:FF:000077">
    <property type="entry name" value="Leucine--tRNA ligase"/>
    <property type="match status" value="1"/>
</dbReference>
<dbReference type="FunFam" id="1.10.730.10:FF:000011">
    <property type="entry name" value="Leucine--tRNA ligase chloroplastic/mitochondrial"/>
    <property type="match status" value="1"/>
</dbReference>
<dbReference type="Gene3D" id="3.40.50.620">
    <property type="entry name" value="HUPs"/>
    <property type="match status" value="2"/>
</dbReference>
<dbReference type="Gene3D" id="1.10.730.10">
    <property type="entry name" value="Isoleucyl-tRNA Synthetase, Domain 1"/>
    <property type="match status" value="1"/>
</dbReference>
<dbReference type="Gene3D" id="3.90.740.10">
    <property type="entry name" value="Valyl/Leucyl/Isoleucyl-tRNA synthetase, editing domain"/>
    <property type="match status" value="1"/>
</dbReference>
<dbReference type="HAMAP" id="MF_00049_B">
    <property type="entry name" value="Leu_tRNA_synth_B"/>
    <property type="match status" value="1"/>
</dbReference>
<dbReference type="InterPro" id="IPR001412">
    <property type="entry name" value="aa-tRNA-synth_I_CS"/>
</dbReference>
<dbReference type="InterPro" id="IPR002300">
    <property type="entry name" value="aa-tRNA-synth_Ia"/>
</dbReference>
<dbReference type="InterPro" id="IPR002302">
    <property type="entry name" value="Leu-tRNA-ligase"/>
</dbReference>
<dbReference type="InterPro" id="IPR025709">
    <property type="entry name" value="Leu_tRNA-synth_edit"/>
</dbReference>
<dbReference type="InterPro" id="IPR013155">
    <property type="entry name" value="M/V/L/I-tRNA-synth_anticd-bd"/>
</dbReference>
<dbReference type="InterPro" id="IPR015413">
    <property type="entry name" value="Methionyl/Leucyl_tRNA_Synth"/>
</dbReference>
<dbReference type="InterPro" id="IPR014729">
    <property type="entry name" value="Rossmann-like_a/b/a_fold"/>
</dbReference>
<dbReference type="InterPro" id="IPR009080">
    <property type="entry name" value="tRNAsynth_Ia_anticodon-bd"/>
</dbReference>
<dbReference type="InterPro" id="IPR009008">
    <property type="entry name" value="Val/Leu/Ile-tRNA-synth_edit"/>
</dbReference>
<dbReference type="NCBIfam" id="TIGR00396">
    <property type="entry name" value="leuS_bact"/>
    <property type="match status" value="1"/>
</dbReference>
<dbReference type="PANTHER" id="PTHR43740:SF2">
    <property type="entry name" value="LEUCINE--TRNA LIGASE, MITOCHONDRIAL"/>
    <property type="match status" value="1"/>
</dbReference>
<dbReference type="PANTHER" id="PTHR43740">
    <property type="entry name" value="LEUCYL-TRNA SYNTHETASE"/>
    <property type="match status" value="1"/>
</dbReference>
<dbReference type="Pfam" id="PF08264">
    <property type="entry name" value="Anticodon_1"/>
    <property type="match status" value="1"/>
</dbReference>
<dbReference type="Pfam" id="PF00133">
    <property type="entry name" value="tRNA-synt_1"/>
    <property type="match status" value="2"/>
</dbReference>
<dbReference type="Pfam" id="PF13603">
    <property type="entry name" value="tRNA-synt_1_2"/>
    <property type="match status" value="1"/>
</dbReference>
<dbReference type="Pfam" id="PF09334">
    <property type="entry name" value="tRNA-synt_1g"/>
    <property type="match status" value="1"/>
</dbReference>
<dbReference type="PRINTS" id="PR00985">
    <property type="entry name" value="TRNASYNTHLEU"/>
</dbReference>
<dbReference type="SUPFAM" id="SSF47323">
    <property type="entry name" value="Anticodon-binding domain of a subclass of class I aminoacyl-tRNA synthetases"/>
    <property type="match status" value="1"/>
</dbReference>
<dbReference type="SUPFAM" id="SSF52374">
    <property type="entry name" value="Nucleotidylyl transferase"/>
    <property type="match status" value="1"/>
</dbReference>
<dbReference type="SUPFAM" id="SSF50677">
    <property type="entry name" value="ValRS/IleRS/LeuRS editing domain"/>
    <property type="match status" value="1"/>
</dbReference>
<dbReference type="PROSITE" id="PS00178">
    <property type="entry name" value="AA_TRNA_LIGASE_I"/>
    <property type="match status" value="1"/>
</dbReference>
<comment type="catalytic activity">
    <reaction evidence="1">
        <text>tRNA(Leu) + L-leucine + ATP = L-leucyl-tRNA(Leu) + AMP + diphosphate</text>
        <dbReference type="Rhea" id="RHEA:11688"/>
        <dbReference type="Rhea" id="RHEA-COMP:9613"/>
        <dbReference type="Rhea" id="RHEA-COMP:9622"/>
        <dbReference type="ChEBI" id="CHEBI:30616"/>
        <dbReference type="ChEBI" id="CHEBI:33019"/>
        <dbReference type="ChEBI" id="CHEBI:57427"/>
        <dbReference type="ChEBI" id="CHEBI:78442"/>
        <dbReference type="ChEBI" id="CHEBI:78494"/>
        <dbReference type="ChEBI" id="CHEBI:456215"/>
        <dbReference type="EC" id="6.1.1.4"/>
    </reaction>
</comment>
<comment type="subcellular location">
    <subcellularLocation>
        <location evidence="1">Cytoplasm</location>
    </subcellularLocation>
</comment>
<comment type="similarity">
    <text evidence="1">Belongs to the class-I aminoacyl-tRNA synthetase family.</text>
</comment>
<evidence type="ECO:0000255" key="1">
    <source>
        <dbReference type="HAMAP-Rule" id="MF_00049"/>
    </source>
</evidence>
<feature type="chain" id="PRO_1000091370" description="Leucine--tRNA ligase">
    <location>
        <begin position="1"/>
        <end position="833"/>
    </location>
</feature>
<feature type="short sequence motif" description="'HIGH' region">
    <location>
        <begin position="41"/>
        <end position="52"/>
    </location>
</feature>
<feature type="short sequence motif" description="'KMSKS' region">
    <location>
        <begin position="610"/>
        <end position="614"/>
    </location>
</feature>
<feature type="binding site" evidence="1">
    <location>
        <position position="613"/>
    </location>
    <ligand>
        <name>ATP</name>
        <dbReference type="ChEBI" id="CHEBI:30616"/>
    </ligand>
</feature>
<organism>
    <name type="scientific">Streptococcus pneumoniae (strain Hungary19A-6)</name>
    <dbReference type="NCBI Taxonomy" id="487214"/>
    <lineage>
        <taxon>Bacteria</taxon>
        <taxon>Bacillati</taxon>
        <taxon>Bacillota</taxon>
        <taxon>Bacilli</taxon>
        <taxon>Lactobacillales</taxon>
        <taxon>Streptococcaceae</taxon>
        <taxon>Streptococcus</taxon>
    </lineage>
</organism>
<protein>
    <recommendedName>
        <fullName evidence="1">Leucine--tRNA ligase</fullName>
        <ecNumber evidence="1">6.1.1.4</ecNumber>
    </recommendedName>
    <alternativeName>
        <fullName evidence="1">Leucyl-tRNA synthetase</fullName>
        <shortName evidence="1">LeuRS</shortName>
    </alternativeName>
</protein>
<name>SYL_STRPI</name>
<proteinExistence type="inferred from homology"/>
<sequence length="833" mass="94384">MSFYNHKEIEPKWQGYWAEHHTFKTGTDASKPKFYALDMFPYPSGAGLHVGHPEGYTATDILSRYKRAQGYNVLHPMGWDAFGLPAEQYAMDTGNDPAEFTAENIANFKRQINALGFSYDWDREVNTTDPNYYKWTQWIFTKLYEKGLAYEAEVPVNWVEELGTAIANEEVLPDGTSERGGYPVVRKPMRQWMLKITAYAERLLNDLDELDWPESIKDMQRNWIGKSTGANVTFKVKGTDKEFTVFTTRPDTLFGATFTVLAPEHELVDAITSTEQAEAVADYKHQASLKSDLARTDLAKEKTGVWTGAYAINPVNGKEIPIWIADYVLASYGTGAVMAVPAHDQRDWEFAKQFDLPIVEVLEGGNVEEAAYTEDGLHVNSDFLDGLNKEDAIAKIVAWLEEKGCGQEKVTYRLRDWLFSRQRYWGEPIPIIHWEDGTSTAVPESELPLVLPVTKDIRPSGTGESPLANLTDWLEVTREDGVKGRRETNTMPQWAGSSWYYLRYIDPHNTEKLADEDLLKQWLPVDIYVGGAEHAVLHLLYARFWHKFLYDLGVVPTKEPFQKLFNQGMILGTSYRDHRGALVATDKVEKRDGSFFHVETGEELEQAPAKMSKSLKNVVNPDDVVEQYGADTLRVYEMFMGPLDASIAWSEEGLEGSRKFLDRVYRLITSKEILAENNGALDKVYNETVKAVTEQIESLKFNTAIAQLMVFVNAANKEDKLYVDYAKGFIQLIAPFAPHLAEELWQTVAETGESISYVAWPTWDESKLVEDEIEIVVQIKGKVRAKLMVAKDLSREELQEIALADEKVKAEIDGKEIVKVIAVPNKLVNIVVK</sequence>